<sequence length="176" mass="19074">MASRGVNKVILVGNLGQDPEVRYMPSGGAVANLTLATSESWRDKQTGEMKEQTEWHRVVMFGKLAEVAGEYLRKGSQVYIEGQLRTRKWTDQSGQERYTTEINVPQIGGVMQMLGGRQGGGAPAGGQQQGGWGQPQQPQQPQGGNQFSGGAQSRPQQSAPAPSNEPPMDFDDDIPF</sequence>
<dbReference type="EMBL" id="AE006468">
    <property type="protein sequence ID" value="AAL23080.1"/>
    <property type="molecule type" value="Genomic_DNA"/>
</dbReference>
<dbReference type="EMBL" id="M93014">
    <property type="protein sequence ID" value="AAA27249.1"/>
    <property type="molecule type" value="Genomic_DNA"/>
</dbReference>
<dbReference type="RefSeq" id="NP_463121.1">
    <property type="nucleotide sequence ID" value="NC_003197.2"/>
</dbReference>
<dbReference type="PDB" id="7F25">
    <property type="method" value="X-ray"/>
    <property type="resolution" value="2.87 A"/>
    <property type="chains" value="A/B=1-116"/>
</dbReference>
<dbReference type="PDBsum" id="7F25"/>
<dbReference type="SMR" id="P0A2F6"/>
<dbReference type="STRING" id="99287.STM4256"/>
<dbReference type="PaxDb" id="99287-STM4256"/>
<dbReference type="GeneID" id="1255782"/>
<dbReference type="KEGG" id="stm:STM4256"/>
<dbReference type="PATRIC" id="fig|99287.12.peg.4475"/>
<dbReference type="HOGENOM" id="CLU_078758_0_2_6"/>
<dbReference type="PhylomeDB" id="P0A2F6"/>
<dbReference type="BioCyc" id="SENT99287:STM4256-MONOMER"/>
<dbReference type="Proteomes" id="UP000001014">
    <property type="component" value="Chromosome"/>
</dbReference>
<dbReference type="GO" id="GO:0009295">
    <property type="term" value="C:nucleoid"/>
    <property type="evidence" value="ECO:0000318"/>
    <property type="project" value="GO_Central"/>
</dbReference>
<dbReference type="GO" id="GO:0008047">
    <property type="term" value="F:enzyme activator activity"/>
    <property type="evidence" value="ECO:0000318"/>
    <property type="project" value="GO_Central"/>
</dbReference>
<dbReference type="GO" id="GO:0003697">
    <property type="term" value="F:single-stranded DNA binding"/>
    <property type="evidence" value="ECO:0000318"/>
    <property type="project" value="GO_Central"/>
</dbReference>
<dbReference type="GO" id="GO:0006310">
    <property type="term" value="P:DNA recombination"/>
    <property type="evidence" value="ECO:0007669"/>
    <property type="project" value="UniProtKB-UniRule"/>
</dbReference>
<dbReference type="GO" id="GO:0006281">
    <property type="term" value="P:DNA repair"/>
    <property type="evidence" value="ECO:0007669"/>
    <property type="project" value="UniProtKB-UniRule"/>
</dbReference>
<dbReference type="GO" id="GO:0006260">
    <property type="term" value="P:DNA replication"/>
    <property type="evidence" value="ECO:0000318"/>
    <property type="project" value="GO_Central"/>
</dbReference>
<dbReference type="CDD" id="cd04496">
    <property type="entry name" value="SSB_OBF"/>
    <property type="match status" value="1"/>
</dbReference>
<dbReference type="FunFam" id="2.40.50.140:FF:000065">
    <property type="entry name" value="Single-stranded DNA-binding protein"/>
    <property type="match status" value="1"/>
</dbReference>
<dbReference type="Gene3D" id="2.40.50.140">
    <property type="entry name" value="Nucleic acid-binding proteins"/>
    <property type="match status" value="1"/>
</dbReference>
<dbReference type="HAMAP" id="MF_00984">
    <property type="entry name" value="SSB"/>
    <property type="match status" value="1"/>
</dbReference>
<dbReference type="InterPro" id="IPR012340">
    <property type="entry name" value="NA-bd_OB-fold"/>
</dbReference>
<dbReference type="InterPro" id="IPR000424">
    <property type="entry name" value="Primosome_PriB/ssb"/>
</dbReference>
<dbReference type="InterPro" id="IPR011344">
    <property type="entry name" value="ssDNA-bd"/>
</dbReference>
<dbReference type="NCBIfam" id="NF006533">
    <property type="entry name" value="PRK09010.1"/>
    <property type="match status" value="1"/>
</dbReference>
<dbReference type="NCBIfam" id="TIGR00621">
    <property type="entry name" value="ssb"/>
    <property type="match status" value="1"/>
</dbReference>
<dbReference type="PANTHER" id="PTHR10302">
    <property type="entry name" value="SINGLE-STRANDED DNA-BINDING PROTEIN"/>
    <property type="match status" value="1"/>
</dbReference>
<dbReference type="PANTHER" id="PTHR10302:SF27">
    <property type="entry name" value="SINGLE-STRANDED DNA-BINDING PROTEIN"/>
    <property type="match status" value="1"/>
</dbReference>
<dbReference type="Pfam" id="PF00436">
    <property type="entry name" value="SSB"/>
    <property type="match status" value="1"/>
</dbReference>
<dbReference type="PIRSF" id="PIRSF002070">
    <property type="entry name" value="SSB"/>
    <property type="match status" value="1"/>
</dbReference>
<dbReference type="SUPFAM" id="SSF50249">
    <property type="entry name" value="Nucleic acid-binding proteins"/>
    <property type="match status" value="1"/>
</dbReference>
<dbReference type="PROSITE" id="PS50935">
    <property type="entry name" value="SSB"/>
    <property type="match status" value="1"/>
</dbReference>
<evidence type="ECO:0000250" key="1"/>
<evidence type="ECO:0000255" key="2">
    <source>
        <dbReference type="HAMAP-Rule" id="MF_00984"/>
    </source>
</evidence>
<evidence type="ECO:0000256" key="3">
    <source>
        <dbReference type="SAM" id="MobiDB-lite"/>
    </source>
</evidence>
<proteinExistence type="evidence at protein level"/>
<keyword id="KW-0002">3D-structure</keyword>
<keyword id="KW-0227">DNA damage</keyword>
<keyword id="KW-0233">DNA recombination</keyword>
<keyword id="KW-0234">DNA repair</keyword>
<keyword id="KW-0235">DNA replication</keyword>
<keyword id="KW-0238">DNA-binding</keyword>
<keyword id="KW-1185">Reference proteome</keyword>
<feature type="initiator methionine" description="Removed" evidence="1">
    <location>
        <position position="1"/>
    </location>
</feature>
<feature type="chain" id="PRO_0000096092" description="Single-stranded DNA-binding protein 1">
    <location>
        <begin position="2"/>
        <end position="176"/>
    </location>
</feature>
<feature type="domain" description="SSB" evidence="2">
    <location>
        <begin position="6"/>
        <end position="111"/>
    </location>
</feature>
<feature type="region of interest" description="Disordered" evidence="3">
    <location>
        <begin position="111"/>
        <end position="176"/>
    </location>
</feature>
<feature type="short sequence motif" description="Important for interaction with partner proteins" evidence="2">
    <location>
        <begin position="171"/>
        <end position="176"/>
    </location>
</feature>
<feature type="compositionally biased region" description="Gly residues" evidence="3">
    <location>
        <begin position="116"/>
        <end position="133"/>
    </location>
</feature>
<feature type="compositionally biased region" description="Low complexity" evidence="3">
    <location>
        <begin position="134"/>
        <end position="150"/>
    </location>
</feature>
<feature type="compositionally biased region" description="Polar residues" evidence="3">
    <location>
        <begin position="151"/>
        <end position="161"/>
    </location>
</feature>
<gene>
    <name type="primary">ssb</name>
    <name type="ordered locus">STM4256</name>
</gene>
<accession>P0A2F6</accession>
<accession>P37435</accession>
<protein>
    <recommendedName>
        <fullName evidence="2">Single-stranded DNA-binding protein 1</fullName>
        <shortName evidence="2">SSB 1</shortName>
    </recommendedName>
</protein>
<name>SSB1_SALTY</name>
<comment type="function">
    <text evidence="2">Plays an important role in DNA replication, recombination and repair. Binds to ssDNA and to an array of partner proteins to recruit them to their sites of action during DNA metabolism.</text>
</comment>
<comment type="subunit">
    <text evidence="2">Homotetramer.</text>
</comment>
<reference key="1">
    <citation type="journal article" date="2001" name="Nature">
        <title>Complete genome sequence of Salmonella enterica serovar Typhimurium LT2.</title>
        <authorList>
            <person name="McClelland M."/>
            <person name="Sanderson K.E."/>
            <person name="Spieth J."/>
            <person name="Clifton S.W."/>
            <person name="Latreille P."/>
            <person name="Courtney L."/>
            <person name="Porwollik S."/>
            <person name="Ali J."/>
            <person name="Dante M."/>
            <person name="Du F."/>
            <person name="Hou S."/>
            <person name="Layman D."/>
            <person name="Leonard S."/>
            <person name="Nguyen C."/>
            <person name="Scott K."/>
            <person name="Holmes A."/>
            <person name="Grewal N."/>
            <person name="Mulvaney E."/>
            <person name="Ryan E."/>
            <person name="Sun H."/>
            <person name="Florea L."/>
            <person name="Miller W."/>
            <person name="Stoneking T."/>
            <person name="Nhan M."/>
            <person name="Waterston R."/>
            <person name="Wilson R.K."/>
        </authorList>
    </citation>
    <scope>NUCLEOTIDE SEQUENCE [LARGE SCALE GENOMIC DNA]</scope>
    <source>
        <strain>LT2 / SGSC1412 / ATCC 700720</strain>
    </source>
</reference>
<reference key="2">
    <citation type="submission" date="1992-08" db="EMBL/GenBank/DDBJ databases">
        <authorList>
            <person name="Alberti M."/>
            <person name="Li Y.F."/>
            <person name="Sancar A."/>
            <person name="Hearst J.E."/>
        </authorList>
    </citation>
    <scope>NUCLEOTIDE SEQUENCE [GENOMIC DNA] OF 1-91</scope>
</reference>
<organism>
    <name type="scientific">Salmonella typhimurium (strain LT2 / SGSC1412 / ATCC 700720)</name>
    <dbReference type="NCBI Taxonomy" id="99287"/>
    <lineage>
        <taxon>Bacteria</taxon>
        <taxon>Pseudomonadati</taxon>
        <taxon>Pseudomonadota</taxon>
        <taxon>Gammaproteobacteria</taxon>
        <taxon>Enterobacterales</taxon>
        <taxon>Enterobacteriaceae</taxon>
        <taxon>Salmonella</taxon>
    </lineage>
</organism>